<organism>
    <name type="scientific">Actinobacillus succinogenes (strain ATCC 55618 / DSM 22257 / CCUG 43843 / 130Z)</name>
    <dbReference type="NCBI Taxonomy" id="339671"/>
    <lineage>
        <taxon>Bacteria</taxon>
        <taxon>Pseudomonadati</taxon>
        <taxon>Pseudomonadota</taxon>
        <taxon>Gammaproteobacteria</taxon>
        <taxon>Pasteurellales</taxon>
        <taxon>Pasteurellaceae</taxon>
        <taxon>Actinobacillus</taxon>
    </lineage>
</organism>
<proteinExistence type="evidence at protein level"/>
<gene>
    <name evidence="4" type="primary">aptA</name>
    <name evidence="5" type="ordered locus">Asuc_0171</name>
</gene>
<dbReference type="EC" id="2.2.1.13" evidence="2"/>
<dbReference type="EMBL" id="CP000746">
    <property type="protein sequence ID" value="ABR73551.1"/>
    <property type="molecule type" value="Genomic_DNA"/>
</dbReference>
<dbReference type="RefSeq" id="WP_011978827.1">
    <property type="nucleotide sequence ID" value="NC_009655.1"/>
</dbReference>
<dbReference type="SMR" id="A6VKQ4"/>
<dbReference type="STRING" id="339671.Asuc_0171"/>
<dbReference type="KEGG" id="asu:Asuc_0171"/>
<dbReference type="eggNOG" id="COG3959">
    <property type="taxonomic scope" value="Bacteria"/>
</dbReference>
<dbReference type="HOGENOM" id="CLU_009227_4_1_6"/>
<dbReference type="OrthoDB" id="8732661at2"/>
<dbReference type="BioCyc" id="MetaCyc:MONOMER-20956"/>
<dbReference type="BRENDA" id="2.2.1.13">
    <property type="organism ID" value="8032"/>
</dbReference>
<dbReference type="SABIO-RK" id="A6VKQ4"/>
<dbReference type="Proteomes" id="UP000001114">
    <property type="component" value="Chromosome"/>
</dbReference>
<dbReference type="GO" id="GO:0016740">
    <property type="term" value="F:transferase activity"/>
    <property type="evidence" value="ECO:0007669"/>
    <property type="project" value="UniProtKB-KW"/>
</dbReference>
<dbReference type="CDD" id="cd02012">
    <property type="entry name" value="TPP_TK"/>
    <property type="match status" value="1"/>
</dbReference>
<dbReference type="Gene3D" id="3.40.50.970">
    <property type="match status" value="1"/>
</dbReference>
<dbReference type="InterPro" id="IPR029061">
    <property type="entry name" value="THDP-binding"/>
</dbReference>
<dbReference type="InterPro" id="IPR005474">
    <property type="entry name" value="Transketolase_N"/>
</dbReference>
<dbReference type="PANTHER" id="PTHR47514">
    <property type="entry name" value="TRANSKETOLASE N-TERMINAL SECTION-RELATED"/>
    <property type="match status" value="1"/>
</dbReference>
<dbReference type="PANTHER" id="PTHR47514:SF1">
    <property type="entry name" value="TRANSKETOLASE N-TERMINAL SECTION-RELATED"/>
    <property type="match status" value="1"/>
</dbReference>
<dbReference type="Pfam" id="PF00456">
    <property type="entry name" value="Transketolase_N"/>
    <property type="match status" value="1"/>
</dbReference>
<dbReference type="SUPFAM" id="SSF52518">
    <property type="entry name" value="Thiamin diphosphate-binding fold (THDP-binding)"/>
    <property type="match status" value="1"/>
</dbReference>
<sequence length="276" mass="30173">MNPYNLSYDELEKKAKAIRRKIVVLNANSPAGGHTGADLSQVEILTSLYFRVLNNDPKDLINPERDIYIQSKGHGAGGYYCCLAEAGYIPEDWLPTYQHSDSKLPGHPVKHKTPGVELNTGALGHGLPVAVGLAIAAKKSGSKRKIYVLTGDGELGEGSNWEAALTAAQYKLDNLIIINDKNKLQLAGFTKDILCTDPLDKKWEAFGMEVHECQGNDIRSVVDTLESIQPNGKPHVVIANTTKGAGISFIEGRPEWHHKVPKGDEVELALEELKDE</sequence>
<feature type="chain" id="PRO_0000446025" description="Apulose-4-phosphate transketolase subunit A">
    <location>
        <begin position="1"/>
        <end position="276"/>
    </location>
</feature>
<keyword id="KW-0119">Carbohydrate metabolism</keyword>
<keyword id="KW-1185">Reference proteome</keyword>
<keyword id="KW-0786">Thiamine pyrophosphate</keyword>
<keyword id="KW-0808">Transferase</keyword>
<protein>
    <recommendedName>
        <fullName evidence="3">Apulose-4-phosphate transketolase subunit A</fullName>
        <ecNumber evidence="2">2.2.1.13</ecNumber>
    </recommendedName>
    <alternativeName>
        <fullName evidence="3">Apulose-4-phosphate transketolase N-terminal subunit</fullName>
    </alternativeName>
</protein>
<accession>A6VKQ4</accession>
<name>APTA_ACTSZ</name>
<evidence type="ECO:0000250" key="1">
    <source>
        <dbReference type="UniProtKB" id="P29401"/>
    </source>
</evidence>
<evidence type="ECO:0000269" key="2">
    <source>
    </source>
</evidence>
<evidence type="ECO:0000305" key="3"/>
<evidence type="ECO:0000305" key="4">
    <source>
    </source>
</evidence>
<evidence type="ECO:0000312" key="5">
    <source>
        <dbReference type="EMBL" id="ABR73551.1"/>
    </source>
</evidence>
<comment type="function">
    <text evidence="2">Involved in catabolism of D-apiose. Catalyzes the transfer of the glycolaldehyde group from apulose-4-phosphate to D-glyceraldehyde 3-phosphate, generating dihydroxyacetone phosphate and D-xylulose-5-phosphate.</text>
</comment>
<comment type="catalytic activity">
    <reaction evidence="2">
        <text>apulose 4-phosphate + D-glyceraldehyde 3-phosphate = D-xylulose 5-phosphate + dihydroxyacetone phosphate</text>
        <dbReference type="Rhea" id="RHEA:57024"/>
        <dbReference type="ChEBI" id="CHEBI:57642"/>
        <dbReference type="ChEBI" id="CHEBI:57737"/>
        <dbReference type="ChEBI" id="CHEBI:59776"/>
        <dbReference type="ChEBI" id="CHEBI:141351"/>
        <dbReference type="EC" id="2.2.1.13"/>
    </reaction>
</comment>
<comment type="cofactor">
    <cofactor evidence="1">
        <name>thiamine diphosphate</name>
        <dbReference type="ChEBI" id="CHEBI:58937"/>
    </cofactor>
</comment>
<comment type="pathway">
    <text evidence="2">Carbohydrate metabolism.</text>
</comment>
<comment type="subunit">
    <text evidence="4">Probable heterodimer composed of AptA and AptB.</text>
</comment>
<comment type="similarity">
    <text evidence="3">Belongs to the transketolase family.</text>
</comment>
<reference key="1">
    <citation type="journal article" date="2010" name="BMC Genomics">
        <title>A genomic perspective on the potential of Actinobacillus succinogenes for industrial succinate production.</title>
        <authorList>
            <person name="McKinlay J.B."/>
            <person name="Laivenieks M."/>
            <person name="Schindler B.D."/>
            <person name="McKinlay A.A."/>
            <person name="Siddaramappa S."/>
            <person name="Challacombe J.F."/>
            <person name="Lowry S.R."/>
            <person name="Clum A."/>
            <person name="Lapidus A.L."/>
            <person name="Burkhart K.B."/>
            <person name="Harkins V."/>
            <person name="Vieille C."/>
        </authorList>
    </citation>
    <scope>NUCLEOTIDE SEQUENCE [LARGE SCALE GENOMIC DNA]</scope>
    <source>
        <strain>ATCC 55618 / DSM 22257 / CCUG 43843 / 130Z</strain>
    </source>
</reference>
<reference key="2">
    <citation type="journal article" date="2018" name="Nat. Chem. Biol.">
        <title>Functional assignment of multiple catabolic pathways for D-apiose.</title>
        <authorList>
            <person name="Carter M.S."/>
            <person name="Zhang X."/>
            <person name="Huang H."/>
            <person name="Bouvier J.T."/>
            <person name="Francisco B.S."/>
            <person name="Vetting M.W."/>
            <person name="Al-Obaidi N."/>
            <person name="Bonanno J.B."/>
            <person name="Ghosh A."/>
            <person name="Zallot R.G."/>
            <person name="Andersen H.M."/>
            <person name="Almo S.C."/>
            <person name="Gerlt J.A."/>
        </authorList>
    </citation>
    <scope>FUNCTION</scope>
    <scope>CATALYTIC ACTIVITY</scope>
    <scope>PATHWAY</scope>
    <scope>SUBUNIT</scope>
</reference>